<feature type="chain" id="PRO_0000456172" description="Toxin YeeF">
    <location>
        <begin position="1"/>
        <end position="669"/>
    </location>
</feature>
<feature type="domain" description="LXG" evidence="2">
    <location>
        <begin position="1"/>
        <end position="235"/>
    </location>
</feature>
<feature type="region of interest" description="Disordered" evidence="3">
    <location>
        <begin position="558"/>
        <end position="583"/>
    </location>
</feature>
<feature type="compositionally biased region" description="Basic and acidic residues" evidence="3">
    <location>
        <begin position="569"/>
        <end position="580"/>
    </location>
</feature>
<feature type="mutagenesis site" description="Loss of DNase activity, no longer inhibits E.coli growth." evidence="4">
    <original>H</original>
    <variation>A</variation>
    <location>
        <position position="581"/>
    </location>
</feature>
<gene>
    <name evidence="5 7" type="primary">yeeF</name>
    <name type="ordered locus">BSUW23_03455</name>
</gene>
<evidence type="ECO:0000250" key="1">
    <source>
        <dbReference type="UniProtKB" id="O31506"/>
    </source>
</evidence>
<evidence type="ECO:0000255" key="2">
    <source>
        <dbReference type="PROSITE-ProRule" id="PRU01092"/>
    </source>
</evidence>
<evidence type="ECO:0000256" key="3">
    <source>
        <dbReference type="SAM" id="MobiDB-lite"/>
    </source>
</evidence>
<evidence type="ECO:0000269" key="4">
    <source>
    </source>
</evidence>
<evidence type="ECO:0000303" key="5">
    <source>
    </source>
</evidence>
<evidence type="ECO:0000305" key="6">
    <source>
    </source>
</evidence>
<evidence type="ECO:0000312" key="7">
    <source>
        <dbReference type="EMBL" id="ADM36747.1"/>
    </source>
</evidence>
<name>YEEF_BACSH</name>
<keyword id="KW-1003">Cell membrane</keyword>
<keyword id="KW-0238">DNA-binding</keyword>
<keyword id="KW-0378">Hydrolase</keyword>
<keyword id="KW-0472">Membrane</keyword>
<keyword id="KW-0540">Nuclease</keyword>
<keyword id="KW-0800">Toxin</keyword>
<dbReference type="EMBL" id="CP002183">
    <property type="protein sequence ID" value="ADM36747.1"/>
    <property type="molecule type" value="Genomic_DNA"/>
</dbReference>
<dbReference type="SASBDB" id="E0TU96"/>
<dbReference type="SMR" id="E0TU96"/>
<dbReference type="KEGG" id="bss:BSUW23_03455"/>
<dbReference type="HOGENOM" id="CLU_023665_0_1_9"/>
<dbReference type="Proteomes" id="UP000002233">
    <property type="component" value="Chromosome"/>
</dbReference>
<dbReference type="GO" id="GO:0045121">
    <property type="term" value="C:membrane raft"/>
    <property type="evidence" value="ECO:0007669"/>
    <property type="project" value="UniProtKB-SubCell"/>
</dbReference>
<dbReference type="GO" id="GO:0005886">
    <property type="term" value="C:plasma membrane"/>
    <property type="evidence" value="ECO:0007669"/>
    <property type="project" value="UniProtKB-SubCell"/>
</dbReference>
<dbReference type="GO" id="GO:0003677">
    <property type="term" value="F:DNA binding"/>
    <property type="evidence" value="ECO:0007669"/>
    <property type="project" value="UniProtKB-KW"/>
</dbReference>
<dbReference type="GO" id="GO:0004518">
    <property type="term" value="F:nuclease activity"/>
    <property type="evidence" value="ECO:0007669"/>
    <property type="project" value="UniProtKB-KW"/>
</dbReference>
<dbReference type="GO" id="GO:0090729">
    <property type="term" value="F:toxin activity"/>
    <property type="evidence" value="ECO:0007669"/>
    <property type="project" value="UniProtKB-KW"/>
</dbReference>
<dbReference type="Gene3D" id="3.40.570.10">
    <property type="entry name" value="Extracellular Endonuclease, subunit A"/>
    <property type="match status" value="1"/>
</dbReference>
<dbReference type="InterPro" id="IPR051768">
    <property type="entry name" value="Bact_secretion_toxin"/>
</dbReference>
<dbReference type="InterPro" id="IPR044929">
    <property type="entry name" value="DNA/RNA_non-sp_Endonuclease_sf"/>
</dbReference>
<dbReference type="InterPro" id="IPR044927">
    <property type="entry name" value="Endonuclea_NS_2"/>
</dbReference>
<dbReference type="InterPro" id="IPR006829">
    <property type="entry name" value="LXG_dom"/>
</dbReference>
<dbReference type="PANTHER" id="PTHR34976">
    <property type="entry name" value="RIBONUCLEASE YQCG-RELATED"/>
    <property type="match status" value="1"/>
</dbReference>
<dbReference type="PANTHER" id="PTHR34976:SF2">
    <property type="entry name" value="TYPE VII SECRETION SYSTEM PROTEIN ESSD"/>
    <property type="match status" value="1"/>
</dbReference>
<dbReference type="Pfam" id="PF13930">
    <property type="entry name" value="Endonuclea_NS_2"/>
    <property type="match status" value="1"/>
</dbReference>
<dbReference type="Pfam" id="PF04740">
    <property type="entry name" value="LXG"/>
    <property type="match status" value="1"/>
</dbReference>
<dbReference type="PROSITE" id="PS51756">
    <property type="entry name" value="LXG"/>
    <property type="match status" value="1"/>
</dbReference>
<sequence>MKVLEVKTLLSEATDRAKEYKELRTQMVNLRKALKSVADLGDSEFSGKGASNIKAFYHDHVGVTDQWIDYIDMKIAFFNSIAGAAEDKGLSDAYIEESFLEHELANAHKKSKSIMSEQKKAMKDILNDIDNILPLDLFSTETFNDELADANDKRKKTLEKLDALDEDLKTEYALSEPNEQFIKSDFQKLQEATGKGKNATPIHYNAKAYRESDIHKKKGDIEKRTEAYLKIKKEEAKEREIEKLKERLKNYDYADADEFYEMAKTIGYENLTAEQQRYFTQIENTRELEAGFKGVAVGLYDSGKDAVVGLWDMVTDPGGTVEAITGAVAHPIKTYEAISAAIEESYQKDMVNGDTYSRARWVSYAVGTVVTSIVGTKGVGAVSKTGTATKVTTKVKTAASKSATAQKAITVSKQTIDHIKQKVNKGIEVSKKHVKTKLNQIGDLTLADILPYHPRHDLVPAGVPYNAVNGVTLKEGLQKFAKVILPKPYGTSSSGRRTPAPVVPPVTVKYGEHYARWSRKKVLKPNIIYKTKEGYTYTTDNYGRITSVKADLQLGEAKRNQYAQSHAGKPQDRKPDDDGGHLIATQFKGSGQFDNIVPMNSQINRSGGRWYEMEQEWAKALKEEPPQKVNVNIKAIYKGDSLRPDKFIVKFRIGDADFEKVTIKNQSGG</sequence>
<reference evidence="7" key="1">
    <citation type="journal article" date="2011" name="Microbiology">
        <title>The genome sequence of Bacillus subtilis subsp. spizizenii W23: insights into speciation within the B. subtilis complex and into the history of B. subtilis genetics.</title>
        <authorList>
            <person name="Zeigler D.R."/>
        </authorList>
    </citation>
    <scope>NUCLEOTIDE SEQUENCE [LARGE SCALE GENOMIC DNA]</scope>
    <source>
        <strain>ATCC 23059 / NRRL B-14472 / W23</strain>
    </source>
</reference>
<reference key="2">
    <citation type="journal article" date="2020" name="Front. Microbiol.">
        <title>Molecular and Biochemical Characterization of YeeF/YezG, a Polymorphic Toxin-Immunity Protein Pair From Bacillus subtilis.</title>
        <authorList>
            <person name="Kaundal S."/>
            <person name="Deep A."/>
            <person name="Kaur G."/>
            <person name="Thakur K.G."/>
        </authorList>
    </citation>
    <scope>FUNCTION AS A TOXIN</scope>
    <scope>FUNCTION AS A DNASE</scope>
    <scope>COFACTOR</scope>
    <scope>BIOPHYSICOCHEMICAL PROPERTIES</scope>
    <scope>EXPRESSION IN E.COLI</scope>
    <scope>MUTAGENESIS OF HIS-581</scope>
    <scope>DNA-BINDING</scope>
    <source>
        <strain>ATCC 23059 / NRRL B-14472 / W23</strain>
    </source>
</reference>
<protein>
    <recommendedName>
        <fullName evidence="5">Toxin YeeF</fullName>
    </recommendedName>
    <alternativeName>
        <fullName evidence="5">DNase YeeF</fullName>
    </alternativeName>
</protein>
<comment type="function">
    <text evidence="1 4">Toxic component of an LXG toxin-immunity module (PubMed:32117125). These modules promote kin selection, mediate competition in biofilms, and drive spatial segregation of different strains, indicating that LXG toxins may help avoid warfare between strains in biofilms (By similarity). The C-terminus (residues 527 to 669) has DNase activity in E.coli and in vitro, and inhibits growth upon expression in E.coli; does not have RNase activity. Acts on supercoiled, genomic, linear and nicked DNA. By 2 hours post-induction cells have an irregular surface, membrane disruption and elongate. All toxic effects in E.coli are neutralized by cognate immunity protein YezG. Binds DNA in the presence and absence of YezG; substrate-binding and immunity protein-binding must occur at distinct sites on the toxin (PubMed:32117125).</text>
</comment>
<comment type="cofactor">
    <cofactor evidence="4">
        <name>a divalent metal cation</name>
        <dbReference type="ChEBI" id="CHEBI:60240"/>
    </cofactor>
    <cofactor evidence="4">
        <name>Mn(2+)</name>
        <dbReference type="ChEBI" id="CHEBI:29035"/>
    </cofactor>
    <cofactor evidence="4">
        <name>Mg(2+)</name>
        <dbReference type="ChEBI" id="CHEBI:18420"/>
    </cofactor>
    <text evidence="4">10 uM Mn(2+) or 10 mM Mg(2+) are equally active in vitro.</text>
</comment>
<comment type="biophysicochemical properties">
    <phDependence>
        <text evidence="4">Optimum pH is 5.5 for the C-terminal fragment DNase.</text>
    </phDependence>
    <temperatureDependence>
        <text evidence="4">Optimum temperature is 37 degrees Celsius for the C-terminal fragment DNase.</text>
    </temperatureDependence>
</comment>
<comment type="subunit">
    <text evidence="4 6">The C-terminal fragment is a homodimer (PubMed:32117125). The C-terminus interacts with cognate immunity protein YezG, probably with 2:2 stoichiometry. The second YezG molecules binds with lower affinity (Probable).</text>
</comment>
<comment type="subcellular location">
    <subcellularLocation>
        <location evidence="1">Cell membrane</location>
    </subcellularLocation>
    <subcellularLocation>
        <location evidence="1">Membrane raft</location>
    </subcellularLocation>
    <text evidence="1">Present in detergent-resistant membrane (DRM) fractions that may be equivalent to eukaryotic membrane rafts; these rafts include proteins involved in signaling, molecule trafficking and protein secretion. Delivery to target cells requires the type VII secretion system (T7SS) and YukE.</text>
</comment>
<comment type="similarity">
    <text evidence="5">In the N-terminal section; belongs to the LXG family.</text>
</comment>
<accession>E0TU96</accession>
<organism>
    <name type="scientific">Bacillus spizizenii (strain ATCC 23059 / NRRL B-14472 / W23)</name>
    <name type="common">Bacillus subtilis subsp. spizizenii</name>
    <dbReference type="NCBI Taxonomy" id="655816"/>
    <lineage>
        <taxon>Bacteria</taxon>
        <taxon>Bacillati</taxon>
        <taxon>Bacillota</taxon>
        <taxon>Bacilli</taxon>
        <taxon>Bacillales</taxon>
        <taxon>Bacillaceae</taxon>
        <taxon>Bacillus</taxon>
    </lineage>
</organism>
<proteinExistence type="evidence at protein level"/>